<accession>Q29397</accession>
<protein>
    <recommendedName>
        <fullName>Synaptic vesicle glycoprotein 2A</fullName>
    </recommendedName>
    <alternativeName>
        <fullName>p87</fullName>
    </alternativeName>
</protein>
<gene>
    <name type="primary">SV2A</name>
</gene>
<evidence type="ECO:0000250" key="1"/>
<evidence type="ECO:0000250" key="2">
    <source>
        <dbReference type="UniProtKB" id="Q02563"/>
    </source>
</evidence>
<evidence type="ECO:0000250" key="3">
    <source>
        <dbReference type="UniProtKB" id="Q7L0J3"/>
    </source>
</evidence>
<evidence type="ECO:0000250" key="4">
    <source>
        <dbReference type="UniProtKB" id="Q9JIS5"/>
    </source>
</evidence>
<evidence type="ECO:0000255" key="5"/>
<evidence type="ECO:0000256" key="6">
    <source>
        <dbReference type="SAM" id="MobiDB-lite"/>
    </source>
</evidence>
<evidence type="ECO:0000305" key="7"/>
<feature type="chain" id="PRO_0000239763" description="Synaptic vesicle glycoprotein 2A">
    <location>
        <begin position="1"/>
        <end position="742"/>
    </location>
</feature>
<feature type="topological domain" description="Cytoplasmic" evidence="5">
    <location>
        <begin position="1"/>
        <end position="169"/>
    </location>
</feature>
<feature type="transmembrane region" description="Helical" evidence="5">
    <location>
        <begin position="170"/>
        <end position="190"/>
    </location>
</feature>
<feature type="topological domain" description="Extracellular" evidence="5">
    <location>
        <begin position="191"/>
        <end position="205"/>
    </location>
</feature>
<feature type="transmembrane region" description="Helical" evidence="5">
    <location>
        <begin position="206"/>
        <end position="226"/>
    </location>
</feature>
<feature type="topological domain" description="Cytoplasmic" evidence="5">
    <location>
        <begin position="227"/>
        <end position="233"/>
    </location>
</feature>
<feature type="transmembrane region" description="Helical" evidence="5">
    <location>
        <begin position="234"/>
        <end position="254"/>
    </location>
</feature>
<feature type="topological domain" description="Extracellular" evidence="5">
    <location>
        <begin position="255"/>
        <end position="262"/>
    </location>
</feature>
<feature type="transmembrane region" description="Helical" evidence="5">
    <location>
        <begin position="263"/>
        <end position="283"/>
    </location>
</feature>
<feature type="topological domain" description="Cytoplasmic" evidence="5">
    <location>
        <begin position="284"/>
        <end position="294"/>
    </location>
</feature>
<feature type="transmembrane region" description="Helical" evidence="5">
    <location>
        <begin position="295"/>
        <end position="315"/>
    </location>
</feature>
<feature type="topological domain" description="Extracellular" evidence="5">
    <location>
        <begin position="316"/>
        <end position="334"/>
    </location>
</feature>
<feature type="transmembrane region" description="Helical" evidence="5">
    <location>
        <begin position="335"/>
        <end position="355"/>
    </location>
</feature>
<feature type="topological domain" description="Cytoplasmic" evidence="5">
    <location>
        <begin position="356"/>
        <end position="447"/>
    </location>
</feature>
<feature type="transmembrane region" description="Helical" evidence="5">
    <location>
        <begin position="448"/>
        <end position="468"/>
    </location>
</feature>
<feature type="topological domain" description="Extracellular" evidence="5">
    <location>
        <begin position="469"/>
        <end position="598"/>
    </location>
</feature>
<feature type="transmembrane region" description="Helical" evidence="5">
    <location>
        <begin position="599"/>
        <end position="619"/>
    </location>
</feature>
<feature type="topological domain" description="Cytoplasmic" evidence="5">
    <location>
        <begin position="620"/>
        <end position="626"/>
    </location>
</feature>
<feature type="transmembrane region" description="Helical" evidence="5">
    <location>
        <begin position="627"/>
        <end position="647"/>
    </location>
</feature>
<feature type="topological domain" description="Extracellular" evidence="5">
    <location>
        <begin position="648"/>
        <end position="651"/>
    </location>
</feature>
<feature type="transmembrane region" description="Helical" evidence="5">
    <location>
        <begin position="652"/>
        <end position="672"/>
    </location>
</feature>
<feature type="topological domain" description="Cytoplasmic" evidence="5">
    <location>
        <begin position="673"/>
        <end position="685"/>
    </location>
</feature>
<feature type="transmembrane region" description="Helical" evidence="5">
    <location>
        <begin position="686"/>
        <end position="708"/>
    </location>
</feature>
<feature type="topological domain" description="Extracellular" evidence="5">
    <location>
        <begin position="709"/>
        <end position="712"/>
    </location>
</feature>
<feature type="transmembrane region" description="Helical" evidence="5">
    <location>
        <begin position="713"/>
        <end position="731"/>
    </location>
</feature>
<feature type="topological domain" description="Cytoplasmic" evidence="5">
    <location>
        <begin position="732"/>
        <end position="742"/>
    </location>
</feature>
<feature type="region of interest" description="Interaction with SYT1" evidence="1">
    <location>
        <begin position="1"/>
        <end position="57"/>
    </location>
</feature>
<feature type="region of interest" description="Disordered" evidence="6">
    <location>
        <begin position="32"/>
        <end position="144"/>
    </location>
</feature>
<feature type="compositionally biased region" description="Basic and acidic residues" evidence="6">
    <location>
        <begin position="32"/>
        <end position="49"/>
    </location>
</feature>
<feature type="compositionally biased region" description="Gly residues" evidence="6">
    <location>
        <begin position="122"/>
        <end position="137"/>
    </location>
</feature>
<feature type="modified residue" description="Phosphoserine" evidence="3">
    <location>
        <position position="80"/>
    </location>
</feature>
<feature type="modified residue" description="Phosphoserine" evidence="3">
    <location>
        <position position="81"/>
    </location>
</feature>
<feature type="modified residue" description="Phosphothreonine" evidence="3">
    <location>
        <position position="84"/>
    </location>
</feature>
<feature type="modified residue" description="Phosphoserine" evidence="2">
    <location>
        <position position="393"/>
    </location>
</feature>
<feature type="modified residue" description="Phosphotyrosine" evidence="4">
    <location>
        <position position="480"/>
    </location>
</feature>
<feature type="glycosylation site" description="N-linked (GlcNAc...) asparagine" evidence="5">
    <location>
        <position position="498"/>
    </location>
</feature>
<feature type="glycosylation site" description="N-linked (GlcNAc...) asparagine" evidence="5">
    <location>
        <position position="548"/>
    </location>
</feature>
<feature type="glycosylation site" description="N-linked (GlcNAc...) asparagine" evidence="5">
    <location>
        <position position="573"/>
    </location>
</feature>
<keyword id="KW-0966">Cell projection</keyword>
<keyword id="KW-0968">Cytoplasmic vesicle</keyword>
<keyword id="KW-0325">Glycoprotein</keyword>
<keyword id="KW-0472">Membrane</keyword>
<keyword id="KW-0532">Neurotransmitter transport</keyword>
<keyword id="KW-0597">Phosphoprotein</keyword>
<keyword id="KW-1185">Reference proteome</keyword>
<keyword id="KW-0770">Synapse</keyword>
<keyword id="KW-0812">Transmembrane</keyword>
<keyword id="KW-1133">Transmembrane helix</keyword>
<keyword id="KW-0813">Transport</keyword>
<proteinExistence type="evidence at transcript level"/>
<reference key="1">
    <citation type="journal article" date="1992" name="FEBS Lett.">
        <title>Identification, characterization, and molecular cloning of a novel transporter-like protein localized to the central nervous system.</title>
        <authorList>
            <person name="Gingrich J.A."/>
            <person name="Andersen P.H."/>
            <person name="Tiberi M."/>
            <person name="el Mestikawy S."/>
            <person name="Jorgensen P.N."/>
            <person name="Fremeau R.T. Jr."/>
            <person name="Caron M.G."/>
        </authorList>
    </citation>
    <scope>NUCLEOTIDE SEQUENCE [MRNA]</scope>
    <source>
        <tissue>Brain</tissue>
    </source>
</reference>
<dbReference type="EMBL" id="S47919">
    <property type="protein sequence ID" value="AAB24028.1"/>
    <property type="molecule type" value="mRNA"/>
</dbReference>
<dbReference type="PIR" id="S27263">
    <property type="entry name" value="S27263"/>
</dbReference>
<dbReference type="RefSeq" id="NP_776387.1">
    <property type="nucleotide sequence ID" value="NM_173962.2"/>
</dbReference>
<dbReference type="RefSeq" id="XP_024840259.1">
    <property type="nucleotide sequence ID" value="XM_024984491.2"/>
</dbReference>
<dbReference type="SMR" id="Q29397"/>
<dbReference type="FunCoup" id="Q29397">
    <property type="interactions" value="1316"/>
</dbReference>
<dbReference type="STRING" id="9913.ENSBTAP00000002101"/>
<dbReference type="GlyCosmos" id="Q29397">
    <property type="glycosylation" value="3 sites, No reported glycans"/>
</dbReference>
<dbReference type="GlyGen" id="Q29397">
    <property type="glycosylation" value="3 sites"/>
</dbReference>
<dbReference type="PaxDb" id="9913-ENSBTAP00000002101"/>
<dbReference type="Ensembl" id="ENSBTAT00000002101.6">
    <property type="protein sequence ID" value="ENSBTAP00000002101.4"/>
    <property type="gene ID" value="ENSBTAG00000001599.6"/>
</dbReference>
<dbReference type="GeneID" id="280936"/>
<dbReference type="KEGG" id="bta:280936"/>
<dbReference type="CTD" id="9900"/>
<dbReference type="VEuPathDB" id="HostDB:ENSBTAG00000001599"/>
<dbReference type="VGNC" id="VGNC:35494">
    <property type="gene designation" value="SV2A"/>
</dbReference>
<dbReference type="eggNOG" id="KOG0255">
    <property type="taxonomic scope" value="Eukaryota"/>
</dbReference>
<dbReference type="GeneTree" id="ENSGT00950000182940"/>
<dbReference type="HOGENOM" id="CLU_001265_46_15_1"/>
<dbReference type="InParanoid" id="Q29397"/>
<dbReference type="OMA" id="NDKSMVF"/>
<dbReference type="OrthoDB" id="433512at2759"/>
<dbReference type="TreeFam" id="TF324824"/>
<dbReference type="Proteomes" id="UP000009136">
    <property type="component" value="Chromosome 3"/>
</dbReference>
<dbReference type="Bgee" id="ENSBTAG00000001599">
    <property type="expression patterns" value="Expressed in prefrontal cortex and 96 other cell types or tissues"/>
</dbReference>
<dbReference type="GO" id="GO:0005911">
    <property type="term" value="C:cell-cell junction"/>
    <property type="evidence" value="ECO:0007669"/>
    <property type="project" value="Ensembl"/>
</dbReference>
<dbReference type="GO" id="GO:0005783">
    <property type="term" value="C:endoplasmic reticulum"/>
    <property type="evidence" value="ECO:0007669"/>
    <property type="project" value="Ensembl"/>
</dbReference>
<dbReference type="GO" id="GO:0098982">
    <property type="term" value="C:GABA-ergic synapse"/>
    <property type="evidence" value="ECO:0007669"/>
    <property type="project" value="Ensembl"/>
</dbReference>
<dbReference type="GO" id="GO:0098978">
    <property type="term" value="C:glutamatergic synapse"/>
    <property type="evidence" value="ECO:0007669"/>
    <property type="project" value="Ensembl"/>
</dbReference>
<dbReference type="GO" id="GO:0031594">
    <property type="term" value="C:neuromuscular junction"/>
    <property type="evidence" value="ECO:0007669"/>
    <property type="project" value="Ensembl"/>
</dbReference>
<dbReference type="GO" id="GO:0043005">
    <property type="term" value="C:neuron projection"/>
    <property type="evidence" value="ECO:0000318"/>
    <property type="project" value="GO_Central"/>
</dbReference>
<dbReference type="GO" id="GO:0048786">
    <property type="term" value="C:presynaptic active zone"/>
    <property type="evidence" value="ECO:0007669"/>
    <property type="project" value="Ensembl"/>
</dbReference>
<dbReference type="GO" id="GO:0030672">
    <property type="term" value="C:synaptic vesicle membrane"/>
    <property type="evidence" value="ECO:0000318"/>
    <property type="project" value="GO_Central"/>
</dbReference>
<dbReference type="GO" id="GO:0019901">
    <property type="term" value="F:protein kinase binding"/>
    <property type="evidence" value="ECO:0007669"/>
    <property type="project" value="Ensembl"/>
</dbReference>
<dbReference type="GO" id="GO:0022857">
    <property type="term" value="F:transmembrane transporter activity"/>
    <property type="evidence" value="ECO:0007669"/>
    <property type="project" value="InterPro"/>
</dbReference>
<dbReference type="GO" id="GO:0006874">
    <property type="term" value="P:intracellular calcium ion homeostasis"/>
    <property type="evidence" value="ECO:0007669"/>
    <property type="project" value="Ensembl"/>
</dbReference>
<dbReference type="GO" id="GO:0016082">
    <property type="term" value="P:synaptic vesicle priming"/>
    <property type="evidence" value="ECO:0007669"/>
    <property type="project" value="Ensembl"/>
</dbReference>
<dbReference type="CDD" id="cd17439">
    <property type="entry name" value="MFS_SV2A"/>
    <property type="match status" value="1"/>
</dbReference>
<dbReference type="FunFam" id="1.20.1250.20:FF:000009">
    <property type="entry name" value="Synaptic vesicle glycoprotein 2A"/>
    <property type="match status" value="1"/>
</dbReference>
<dbReference type="FunFam" id="2.160.20.80:FF:000001">
    <property type="entry name" value="Synaptic vesicle glycoprotein 2A"/>
    <property type="match status" value="1"/>
</dbReference>
<dbReference type="FunFam" id="1.20.1250.20:FF:000014">
    <property type="entry name" value="synaptic vesicle glycoprotein 2A"/>
    <property type="match status" value="1"/>
</dbReference>
<dbReference type="Gene3D" id="2.160.20.80">
    <property type="entry name" value="E3 ubiquitin-protein ligase SopA"/>
    <property type="match status" value="1"/>
</dbReference>
<dbReference type="Gene3D" id="1.20.1250.20">
    <property type="entry name" value="MFS general substrate transporter like domains"/>
    <property type="match status" value="2"/>
</dbReference>
<dbReference type="InterPro" id="IPR055415">
    <property type="entry name" value="LD_SV2"/>
</dbReference>
<dbReference type="InterPro" id="IPR011701">
    <property type="entry name" value="MFS"/>
</dbReference>
<dbReference type="InterPro" id="IPR020846">
    <property type="entry name" value="MFS_dom"/>
</dbReference>
<dbReference type="InterPro" id="IPR005828">
    <property type="entry name" value="MFS_sugar_transport-like"/>
</dbReference>
<dbReference type="InterPro" id="IPR036259">
    <property type="entry name" value="MFS_trans_sf"/>
</dbReference>
<dbReference type="InterPro" id="IPR005829">
    <property type="entry name" value="Sugar_transporter_CS"/>
</dbReference>
<dbReference type="InterPro" id="IPR022308">
    <property type="entry name" value="SV2"/>
</dbReference>
<dbReference type="NCBIfam" id="TIGR01299">
    <property type="entry name" value="synapt_SV2"/>
    <property type="match status" value="1"/>
</dbReference>
<dbReference type="PANTHER" id="PTHR23511">
    <property type="entry name" value="SYNAPTIC VESICLE GLYCOPROTEIN 2"/>
    <property type="match status" value="1"/>
</dbReference>
<dbReference type="PANTHER" id="PTHR23511:SF11">
    <property type="entry name" value="SYNAPTIC VESICLE GLYCOPROTEIN 2A"/>
    <property type="match status" value="1"/>
</dbReference>
<dbReference type="Pfam" id="PF23894">
    <property type="entry name" value="LD_SV2"/>
    <property type="match status" value="1"/>
</dbReference>
<dbReference type="Pfam" id="PF07690">
    <property type="entry name" value="MFS_1"/>
    <property type="match status" value="1"/>
</dbReference>
<dbReference type="Pfam" id="PF00083">
    <property type="entry name" value="Sugar_tr"/>
    <property type="match status" value="1"/>
</dbReference>
<dbReference type="SUPFAM" id="SSF103473">
    <property type="entry name" value="MFS general substrate transporter"/>
    <property type="match status" value="2"/>
</dbReference>
<dbReference type="SUPFAM" id="SSF141571">
    <property type="entry name" value="Pentapeptide repeat-like"/>
    <property type="match status" value="1"/>
</dbReference>
<dbReference type="PROSITE" id="PS50850">
    <property type="entry name" value="MFS"/>
    <property type="match status" value="1"/>
</dbReference>
<name>SV2A_BOVIN</name>
<organism>
    <name type="scientific">Bos taurus</name>
    <name type="common">Bovine</name>
    <dbReference type="NCBI Taxonomy" id="9913"/>
    <lineage>
        <taxon>Eukaryota</taxon>
        <taxon>Metazoa</taxon>
        <taxon>Chordata</taxon>
        <taxon>Craniata</taxon>
        <taxon>Vertebrata</taxon>
        <taxon>Euteleostomi</taxon>
        <taxon>Mammalia</taxon>
        <taxon>Eutheria</taxon>
        <taxon>Laurasiatheria</taxon>
        <taxon>Artiodactyla</taxon>
        <taxon>Ruminantia</taxon>
        <taxon>Pecora</taxon>
        <taxon>Bovidae</taxon>
        <taxon>Bovinae</taxon>
        <taxon>Bos</taxon>
    </lineage>
</organism>
<sequence length="742" mass="82589">MEEGFRDRAAFIRGAKDIAKEVKKHATKKVVKGLDRVQDEYSRRSYSRFEEEDDDDDFPAPADGYYRGEGAQDEEEGGASSDATEGHDEDDEIYEGEYQGIPRAESGGKGERMADGAPLAGVRGGLGDGEGPPGGRGEAQRRKEREELAQQYEAILRECGHGRFQWTLYFVLGLALMADGVEVFVVGFVLPSAEKDMCLSDSNKGMLGLIVYLGMMVGAFLWGGLADRLGRRQCLLISLSVNSVFAFFSSFVQGYGTFLFCRLLSGVGIGGSIPIVFSYFSEFLAQEKRGEHLSWLCMFWMIGGVYAAAMAWAIIPHYGWSFQMGSAYQFHSWRVFVLVCAFPSVFAIGALTTQPESPRFFLENGKHDEAWMVLKQVHDTNMRAKGHPERVFSVTHIKTIHQEDELIEIQSDTGAWYQRWGVRALSLGGQVWGNFLSCFGPEYRRITLMMMGVWFTMSFSYYGLTVWFPDMIRHLQAVDYAARTKVFPGERVEHVTFNFTLENQIHRGGQYFNDKFIGLRLKSVSFEDSLFEECYFEDVTSSNTFFRNCTFINTVFYNTDLFEYKFVNSRLVNSTFLHNKEGCPLDVTGTGEGAYMVYFVSFLGTLAVLPGNIVSALLMDKIGRLRMLAGSSVMSCVSCFFLSFGNSESAMIALLCLFGGVSIASWNALDVLTVELYPSDKRTTAFGFLNALCKLAAVLGISIFTSFVGITKAAPILFASAALALGSSLALKLPETRGQVLQ</sequence>
<comment type="function">
    <text evidence="1">Plays a role in the control of regulated secretion in neural and endocrine cells, enhancing selectively low-frequency neurotransmission. Positively regulates vesicle fusion by maintaining the readily releasable pool of secretory vesicles (By similarity).</text>
</comment>
<comment type="subunit">
    <text evidence="1">Interacts with SYT1/synaptotagmin-1 in a calcium-dependent manner. Binds the adapter protein complex AP-2 (By similarity).</text>
</comment>
<comment type="subcellular location">
    <subcellularLocation>
        <location evidence="4">Presynapse</location>
    </subcellularLocation>
    <subcellularLocation>
        <location evidence="2">Cytoplasmic vesicle</location>
        <location evidence="2">Secretory vesicle</location>
        <location evidence="2">Synaptic vesicle membrane</location>
        <topology evidence="2">Multi-pass membrane protein</topology>
    </subcellularLocation>
    <text evidence="2 4">Enriched in chromaffin granules, not present in adrenal microsomes. Associated with both insulin granules and synaptic-like microvesicles in insulin-secreting cells of the pancreas (By similarity). Colocalizes with ATP2B1 at photoreceptor synaptic terminals.</text>
</comment>
<comment type="PTM">
    <text evidence="1">Phosphorylation by CK1 of the N-terminal cytoplasmic domain regulates interaction with SYT1.</text>
</comment>
<comment type="PTM">
    <text evidence="1">N-glycosylated.</text>
</comment>
<comment type="similarity">
    <text evidence="7">Belongs to the major facilitator superfamily.</text>
</comment>